<gene>
    <name type="ordered locus">BAV1115</name>
</gene>
<organism>
    <name type="scientific">Bordetella avium (strain 197N)</name>
    <dbReference type="NCBI Taxonomy" id="360910"/>
    <lineage>
        <taxon>Bacteria</taxon>
        <taxon>Pseudomonadati</taxon>
        <taxon>Pseudomonadota</taxon>
        <taxon>Betaproteobacteria</taxon>
        <taxon>Burkholderiales</taxon>
        <taxon>Alcaligenaceae</taxon>
        <taxon>Bordetella</taxon>
    </lineage>
</organism>
<accession>Q2KUK9</accession>
<reference key="1">
    <citation type="journal article" date="2006" name="J. Bacteriol.">
        <title>Comparison of the genome sequence of the poultry pathogen Bordetella avium with those of B. bronchiseptica, B. pertussis, and B. parapertussis reveals extensive diversity in surface structures associated with host interaction.</title>
        <authorList>
            <person name="Sebaihia M."/>
            <person name="Preston A."/>
            <person name="Maskell D.J."/>
            <person name="Kuzmiak H."/>
            <person name="Connell T.D."/>
            <person name="King N.D."/>
            <person name="Orndorff P.E."/>
            <person name="Miyamoto D.M."/>
            <person name="Thomson N.R."/>
            <person name="Harris D."/>
            <person name="Goble A."/>
            <person name="Lord A."/>
            <person name="Murphy L."/>
            <person name="Quail M.A."/>
            <person name="Rutter S."/>
            <person name="Squares R."/>
            <person name="Squares S."/>
            <person name="Woodward J."/>
            <person name="Parkhill J."/>
            <person name="Temple L.M."/>
        </authorList>
    </citation>
    <scope>NUCLEOTIDE SEQUENCE [LARGE SCALE GENOMIC DNA]</scope>
    <source>
        <strain>197N</strain>
    </source>
</reference>
<comment type="function">
    <text evidence="1">Nucleoside triphosphate pyrophosphatase that hydrolyzes 7-methyl-GTP (m(7)GTP). May have a dual role in cell division arrest and in preventing the incorporation of modified nucleotides into cellular nucleic acids.</text>
</comment>
<comment type="catalytic activity">
    <reaction evidence="1">
        <text>N(7)-methyl-GTP + H2O = N(7)-methyl-GMP + diphosphate + H(+)</text>
        <dbReference type="Rhea" id="RHEA:58744"/>
        <dbReference type="ChEBI" id="CHEBI:15377"/>
        <dbReference type="ChEBI" id="CHEBI:15378"/>
        <dbReference type="ChEBI" id="CHEBI:33019"/>
        <dbReference type="ChEBI" id="CHEBI:58285"/>
        <dbReference type="ChEBI" id="CHEBI:87133"/>
    </reaction>
</comment>
<comment type="cofactor">
    <cofactor evidence="1">
        <name>a divalent metal cation</name>
        <dbReference type="ChEBI" id="CHEBI:60240"/>
    </cofactor>
</comment>
<comment type="subcellular location">
    <subcellularLocation>
        <location evidence="1">Cytoplasm</location>
    </subcellularLocation>
</comment>
<comment type="similarity">
    <text evidence="1">Belongs to the Maf family. YceF subfamily.</text>
</comment>
<sequence>MHQNPRLILASSSRYRRAMLERLRLPFESISPDVDETPQAGEAPAALALRLSVAKAMAVARLHPGCIVIGSDQVATVDGQPIGKPGDFARAKSQLRQLSGRIVEFHSALAVTDGQRTEQADVITYCEFRPLTDAAIDAYLRAEEPYDTAGSAKAEGLGITLMESMRSDDPTAIIGLPLIALTGMLRRFGLDPLRSPS</sequence>
<proteinExistence type="inferred from homology"/>
<keyword id="KW-0963">Cytoplasm</keyword>
<keyword id="KW-0378">Hydrolase</keyword>
<keyword id="KW-0546">Nucleotide metabolism</keyword>
<keyword id="KW-1185">Reference proteome</keyword>
<protein>
    <recommendedName>
        <fullName evidence="1">7-methyl-GTP pyrophosphatase</fullName>
        <shortName evidence="1">m(7)GTP pyrophosphatase</shortName>
        <ecNumber evidence="1">3.6.1.-</ecNumber>
    </recommendedName>
</protein>
<dbReference type="EC" id="3.6.1.-" evidence="1"/>
<dbReference type="EMBL" id="AM167904">
    <property type="protein sequence ID" value="CAJ48724.1"/>
    <property type="molecule type" value="Genomic_DNA"/>
</dbReference>
<dbReference type="RefSeq" id="WP_012416799.1">
    <property type="nucleotide sequence ID" value="NC_010645.1"/>
</dbReference>
<dbReference type="SMR" id="Q2KUK9"/>
<dbReference type="STRING" id="360910.BAV1115"/>
<dbReference type="KEGG" id="bav:BAV1115"/>
<dbReference type="eggNOG" id="COG0424">
    <property type="taxonomic scope" value="Bacteria"/>
</dbReference>
<dbReference type="HOGENOM" id="CLU_040416_1_0_4"/>
<dbReference type="OrthoDB" id="9813694at2"/>
<dbReference type="Proteomes" id="UP000001977">
    <property type="component" value="Chromosome"/>
</dbReference>
<dbReference type="GO" id="GO:0005737">
    <property type="term" value="C:cytoplasm"/>
    <property type="evidence" value="ECO:0007669"/>
    <property type="project" value="UniProtKB-SubCell"/>
</dbReference>
<dbReference type="GO" id="GO:0047429">
    <property type="term" value="F:nucleoside triphosphate diphosphatase activity"/>
    <property type="evidence" value="ECO:0007669"/>
    <property type="project" value="InterPro"/>
</dbReference>
<dbReference type="GO" id="GO:0009117">
    <property type="term" value="P:nucleotide metabolic process"/>
    <property type="evidence" value="ECO:0007669"/>
    <property type="project" value="UniProtKB-KW"/>
</dbReference>
<dbReference type="CDD" id="cd00555">
    <property type="entry name" value="Maf"/>
    <property type="match status" value="1"/>
</dbReference>
<dbReference type="Gene3D" id="3.90.950.10">
    <property type="match status" value="1"/>
</dbReference>
<dbReference type="HAMAP" id="MF_00528">
    <property type="entry name" value="Maf"/>
    <property type="match status" value="1"/>
</dbReference>
<dbReference type="InterPro" id="IPR029001">
    <property type="entry name" value="ITPase-like_fam"/>
</dbReference>
<dbReference type="InterPro" id="IPR003697">
    <property type="entry name" value="Maf-like"/>
</dbReference>
<dbReference type="NCBIfam" id="TIGR00172">
    <property type="entry name" value="maf"/>
    <property type="match status" value="1"/>
</dbReference>
<dbReference type="PANTHER" id="PTHR43213">
    <property type="entry name" value="BIFUNCTIONAL DTTP/UTP PYROPHOSPHATASE/METHYLTRANSFERASE PROTEIN-RELATED"/>
    <property type="match status" value="1"/>
</dbReference>
<dbReference type="PANTHER" id="PTHR43213:SF5">
    <property type="entry name" value="BIFUNCTIONAL DTTP_UTP PYROPHOSPHATASE_METHYLTRANSFERASE PROTEIN-RELATED"/>
    <property type="match status" value="1"/>
</dbReference>
<dbReference type="Pfam" id="PF02545">
    <property type="entry name" value="Maf"/>
    <property type="match status" value="1"/>
</dbReference>
<dbReference type="PIRSF" id="PIRSF006305">
    <property type="entry name" value="Maf"/>
    <property type="match status" value="1"/>
</dbReference>
<dbReference type="SUPFAM" id="SSF52972">
    <property type="entry name" value="ITPase-like"/>
    <property type="match status" value="1"/>
</dbReference>
<feature type="chain" id="PRO_0000267257" description="7-methyl-GTP pyrophosphatase">
    <location>
        <begin position="1"/>
        <end position="197"/>
    </location>
</feature>
<feature type="active site" description="Proton acceptor" evidence="1">
    <location>
        <position position="72"/>
    </location>
</feature>
<feature type="site" description="Important for substrate specificity" evidence="1">
    <location>
        <position position="15"/>
    </location>
</feature>
<feature type="site" description="Important for substrate specificity" evidence="1">
    <location>
        <position position="73"/>
    </location>
</feature>
<feature type="site" description="Important for substrate specificity" evidence="1">
    <location>
        <position position="155"/>
    </location>
</feature>
<evidence type="ECO:0000255" key="1">
    <source>
        <dbReference type="HAMAP-Rule" id="MF_00528"/>
    </source>
</evidence>
<name>NTPPB_BORA1</name>